<organism>
    <name type="scientific">Salmonella typhimurium (strain LT2 / SGSC1412 / ATCC 700720)</name>
    <dbReference type="NCBI Taxonomy" id="99287"/>
    <lineage>
        <taxon>Bacteria</taxon>
        <taxon>Pseudomonadati</taxon>
        <taxon>Pseudomonadota</taxon>
        <taxon>Gammaproteobacteria</taxon>
        <taxon>Enterobacterales</taxon>
        <taxon>Enterobacteriaceae</taxon>
        <taxon>Salmonella</taxon>
    </lineage>
</organism>
<dbReference type="EMBL" id="X05382">
    <property type="protein sequence ID" value="CAA28974.1"/>
    <property type="molecule type" value="Genomic_DNA"/>
</dbReference>
<dbReference type="EMBL" id="AE006468">
    <property type="protein sequence ID" value="AAL20624.1"/>
    <property type="molecule type" value="Genomic_DNA"/>
</dbReference>
<dbReference type="PIR" id="B27190">
    <property type="entry name" value="B27190"/>
</dbReference>
<dbReference type="RefSeq" id="NP_460665.1">
    <property type="nucleotide sequence ID" value="NC_003197.2"/>
</dbReference>
<dbReference type="RefSeq" id="WP_001285199.1">
    <property type="nucleotide sequence ID" value="NC_003197.2"/>
</dbReference>
<dbReference type="SMR" id="P0A2G7"/>
<dbReference type="STRING" id="99287.STM1706"/>
<dbReference type="PaxDb" id="99287-STM1706"/>
<dbReference type="GeneID" id="1253225"/>
<dbReference type="KEGG" id="stm:STM1706"/>
<dbReference type="PATRIC" id="fig|99287.12.peg.1801"/>
<dbReference type="HOGENOM" id="CLU_082805_4_0_6"/>
<dbReference type="OMA" id="KSKCGVG"/>
<dbReference type="PhylomeDB" id="P0A2G7"/>
<dbReference type="BioCyc" id="SENT99287:STM1706-MONOMER"/>
<dbReference type="Proteomes" id="UP000001014">
    <property type="component" value="Chromosome"/>
</dbReference>
<dbReference type="GO" id="GO:0003743">
    <property type="term" value="F:translation initiation factor activity"/>
    <property type="evidence" value="ECO:0007669"/>
    <property type="project" value="InterPro"/>
</dbReference>
<dbReference type="GO" id="GO:0001731">
    <property type="term" value="P:formation of translation preinitiation complex"/>
    <property type="evidence" value="ECO:0000318"/>
    <property type="project" value="GO_Central"/>
</dbReference>
<dbReference type="GO" id="GO:0006417">
    <property type="term" value="P:regulation of translation"/>
    <property type="evidence" value="ECO:0007669"/>
    <property type="project" value="UniProtKB-KW"/>
</dbReference>
<dbReference type="GO" id="GO:0002188">
    <property type="term" value="P:translation reinitiation"/>
    <property type="evidence" value="ECO:0000318"/>
    <property type="project" value="GO_Central"/>
</dbReference>
<dbReference type="CDD" id="cd11567">
    <property type="entry name" value="YciH_like"/>
    <property type="match status" value="1"/>
</dbReference>
<dbReference type="FunFam" id="3.30.780.10:FF:000002">
    <property type="entry name" value="Stress response translation initiation inhibitor"/>
    <property type="match status" value="1"/>
</dbReference>
<dbReference type="Gene3D" id="3.30.780.10">
    <property type="entry name" value="SUI1-like domain"/>
    <property type="match status" value="1"/>
</dbReference>
<dbReference type="InterPro" id="IPR050318">
    <property type="entry name" value="DENR/SUI1_TIF"/>
</dbReference>
<dbReference type="InterPro" id="IPR001950">
    <property type="entry name" value="SUI1"/>
</dbReference>
<dbReference type="InterPro" id="IPR005872">
    <property type="entry name" value="SUI1_arc_bac"/>
</dbReference>
<dbReference type="InterPro" id="IPR036877">
    <property type="entry name" value="SUI1_dom_sf"/>
</dbReference>
<dbReference type="NCBIfam" id="NF006536">
    <property type="entry name" value="PRK09019.1"/>
    <property type="match status" value="1"/>
</dbReference>
<dbReference type="NCBIfam" id="TIGR01158">
    <property type="entry name" value="SUI1_rel"/>
    <property type="match status" value="1"/>
</dbReference>
<dbReference type="PANTHER" id="PTHR12789:SF0">
    <property type="entry name" value="DENSITY-REGULATED PROTEIN"/>
    <property type="match status" value="1"/>
</dbReference>
<dbReference type="PANTHER" id="PTHR12789">
    <property type="entry name" value="DENSITY-REGULATED PROTEIN HOMOLOG"/>
    <property type="match status" value="1"/>
</dbReference>
<dbReference type="Pfam" id="PF01253">
    <property type="entry name" value="SUI1"/>
    <property type="match status" value="1"/>
</dbReference>
<dbReference type="PIRSF" id="PIRSF037511">
    <property type="entry name" value="Transl_init_SUI1_pro"/>
    <property type="match status" value="1"/>
</dbReference>
<dbReference type="SUPFAM" id="SSF55159">
    <property type="entry name" value="eIF1-like"/>
    <property type="match status" value="1"/>
</dbReference>
<dbReference type="PROSITE" id="PS50296">
    <property type="entry name" value="SUI1"/>
    <property type="match status" value="1"/>
</dbReference>
<gene>
    <name type="primary">yciH</name>
    <name type="ordered locus">STM1706</name>
</gene>
<accession>P0A2G7</accession>
<accession>P20770</accession>
<feature type="chain" id="PRO_0000130597" description="Uncharacterized protein YciH">
    <location>
        <begin position="1"/>
        <end position="108"/>
    </location>
</feature>
<feature type="region of interest" description="Disordered" evidence="1">
    <location>
        <begin position="1"/>
        <end position="29"/>
    </location>
</feature>
<feature type="compositionally biased region" description="Polar residues" evidence="1">
    <location>
        <begin position="1"/>
        <end position="15"/>
    </location>
</feature>
<feature type="compositionally biased region" description="Basic and acidic residues" evidence="1">
    <location>
        <begin position="16"/>
        <end position="29"/>
    </location>
</feature>
<name>YCIH_SALTY</name>
<reference key="1">
    <citation type="journal article" date="1987" name="Eur. J. Biochem.">
        <title>Cloning and characterization of the pyrF operon of Salmonella typhimurium.</title>
        <authorList>
            <person name="Theisen M."/>
            <person name="Kelln R.A."/>
            <person name="Neuhard J."/>
        </authorList>
    </citation>
    <scope>NUCLEOTIDE SEQUENCE [GENOMIC DNA]</scope>
</reference>
<reference key="2">
    <citation type="journal article" date="2001" name="Nature">
        <title>Complete genome sequence of Salmonella enterica serovar Typhimurium LT2.</title>
        <authorList>
            <person name="McClelland M."/>
            <person name="Sanderson K.E."/>
            <person name="Spieth J."/>
            <person name="Clifton S.W."/>
            <person name="Latreille P."/>
            <person name="Courtney L."/>
            <person name="Porwollik S."/>
            <person name="Ali J."/>
            <person name="Dante M."/>
            <person name="Du F."/>
            <person name="Hou S."/>
            <person name="Layman D."/>
            <person name="Leonard S."/>
            <person name="Nguyen C."/>
            <person name="Scott K."/>
            <person name="Holmes A."/>
            <person name="Grewal N."/>
            <person name="Mulvaney E."/>
            <person name="Ryan E."/>
            <person name="Sun H."/>
            <person name="Florea L."/>
            <person name="Miller W."/>
            <person name="Stoneking T."/>
            <person name="Nhan M."/>
            <person name="Waterston R."/>
            <person name="Wilson R.K."/>
        </authorList>
    </citation>
    <scope>NUCLEOTIDE SEQUENCE [LARGE SCALE GENOMIC DNA]</scope>
    <source>
        <strain>LT2 / SGSC1412 / ATCC 700720</strain>
    </source>
</reference>
<keyword id="KW-0648">Protein biosynthesis</keyword>
<keyword id="KW-1185">Reference proteome</keyword>
<keyword id="KW-0810">Translation regulation</keyword>
<proteinExistence type="inferred from homology"/>
<protein>
    <recommendedName>
        <fullName>Uncharacterized protein YciH</fullName>
    </recommendedName>
</protein>
<evidence type="ECO:0000256" key="1">
    <source>
        <dbReference type="SAM" id="MobiDB-lite"/>
    </source>
</evidence>
<evidence type="ECO:0000305" key="2"/>
<comment type="similarity">
    <text evidence="2">Belongs to the SUI1 family.</text>
</comment>
<sequence>MSDSNSRLVYSTQTGRIEEPKTAPVRPKGDGIVRIQRQTSGRKGKGVCLITGIEMNDAELTKLAAELKKKCGCGGAVKEGIIEIQGDKRDLIKSLLEAKGMKVKLAGG</sequence>